<gene>
    <name type="primary">POLR2M</name>
    <name type="synonym">GRINL1A</name>
</gene>
<name>GRL1A_PONAB</name>
<dbReference type="EMBL" id="CR857605">
    <property type="protein sequence ID" value="CAH89881.1"/>
    <property type="molecule type" value="mRNA"/>
</dbReference>
<dbReference type="RefSeq" id="NP_001124877.1">
    <property type="nucleotide sequence ID" value="NM_001131405.1"/>
</dbReference>
<dbReference type="SMR" id="Q5REC6"/>
<dbReference type="FunCoup" id="Q5REC6">
    <property type="interactions" value="1635"/>
</dbReference>
<dbReference type="GeneID" id="100171742"/>
<dbReference type="KEGG" id="pon:100171742"/>
<dbReference type="CTD" id="81488"/>
<dbReference type="InParanoid" id="Q5REC6"/>
<dbReference type="OrthoDB" id="2408655at2759"/>
<dbReference type="Proteomes" id="UP000001595">
    <property type="component" value="Unplaced"/>
</dbReference>
<dbReference type="GO" id="GO:0031674">
    <property type="term" value="C:I band"/>
    <property type="evidence" value="ECO:0007669"/>
    <property type="project" value="TreeGrafter"/>
</dbReference>
<dbReference type="GO" id="GO:0005635">
    <property type="term" value="C:nuclear envelope"/>
    <property type="evidence" value="ECO:0007669"/>
    <property type="project" value="TreeGrafter"/>
</dbReference>
<dbReference type="GO" id="GO:0016591">
    <property type="term" value="C:RNA polymerase II, holoenzyme"/>
    <property type="evidence" value="ECO:0007669"/>
    <property type="project" value="TreeGrafter"/>
</dbReference>
<dbReference type="GO" id="GO:0097550">
    <property type="term" value="C:transcription preinitiation complex"/>
    <property type="evidence" value="ECO:0000250"/>
    <property type="project" value="UniProtKB"/>
</dbReference>
<dbReference type="GO" id="GO:0003711">
    <property type="term" value="F:transcription elongation factor activity"/>
    <property type="evidence" value="ECO:0007669"/>
    <property type="project" value="InterPro"/>
</dbReference>
<dbReference type="GO" id="GO:0035556">
    <property type="term" value="P:intracellular signal transduction"/>
    <property type="evidence" value="ECO:0007669"/>
    <property type="project" value="TreeGrafter"/>
</dbReference>
<dbReference type="GO" id="GO:0051685">
    <property type="term" value="P:maintenance of ER location"/>
    <property type="evidence" value="ECO:0007669"/>
    <property type="project" value="TreeGrafter"/>
</dbReference>
<dbReference type="GO" id="GO:0006368">
    <property type="term" value="P:transcription elongation by RNA polymerase II"/>
    <property type="evidence" value="ECO:0007669"/>
    <property type="project" value="InterPro"/>
</dbReference>
<dbReference type="InterPro" id="IPR026213">
    <property type="entry name" value="GRINL1"/>
</dbReference>
<dbReference type="InterPro" id="IPR051375">
    <property type="entry name" value="Tuftelin_GRINL1A/MYZAP/CCD68"/>
</dbReference>
<dbReference type="PANTHER" id="PTHR23171:SF5">
    <property type="entry name" value="DNA-DIRECTED RNA POLYMERASE II SUBUNIT GRINL1A"/>
    <property type="match status" value="1"/>
</dbReference>
<dbReference type="PANTHER" id="PTHR23171">
    <property type="entry name" value="GDOWN1"/>
    <property type="match status" value="1"/>
</dbReference>
<dbReference type="Pfam" id="PF15328">
    <property type="entry name" value="GCOM2"/>
    <property type="match status" value="1"/>
</dbReference>
<dbReference type="PRINTS" id="PR02085">
    <property type="entry name" value="POLR2GRINL1"/>
</dbReference>
<evidence type="ECO:0000250" key="1"/>
<evidence type="ECO:0000250" key="2">
    <source>
        <dbReference type="UniProtKB" id="P0CAP2"/>
    </source>
</evidence>
<evidence type="ECO:0000255" key="3"/>
<evidence type="ECO:0000256" key="4">
    <source>
        <dbReference type="SAM" id="MobiDB-lite"/>
    </source>
</evidence>
<evidence type="ECO:0000305" key="5"/>
<sequence>MCSLPRGFEPQVPEDLERRSLAELREMLKRQERLLRNEKFICKLPDKGKKIFDSFAKLKAAIAECEEVRRKSELCHPVSLDCKLRQKAIAEVDVGTDKAQNSDPILDTSSLVPGCSSVDNIKSSQTSQNQGLGRPTLEGDEETSEVEYSVNKGPASSNRDRVPPSSEASEYHLQHRVSSQAEDTSSSFDNLFIDRLQRITIADQGEQQSENASTKNLTGLSSGTQKKPHYMEVLEMRAKNPVPQLHKFKTNVLPFRQNDSSSHCQKSRSPISSEERRRRDKQHLDDITAARLLPLHHMPTQLLSIEESLALQKQRKQKYEEMQAKLAAQKLAERLNIKMRSYNPEGESSGRYREVRDEDDDWSSDEF</sequence>
<organism>
    <name type="scientific">Pongo abelii</name>
    <name type="common">Sumatran orangutan</name>
    <name type="synonym">Pongo pygmaeus abelii</name>
    <dbReference type="NCBI Taxonomy" id="9601"/>
    <lineage>
        <taxon>Eukaryota</taxon>
        <taxon>Metazoa</taxon>
        <taxon>Chordata</taxon>
        <taxon>Craniata</taxon>
        <taxon>Vertebrata</taxon>
        <taxon>Euteleostomi</taxon>
        <taxon>Mammalia</taxon>
        <taxon>Eutheria</taxon>
        <taxon>Euarchontoglires</taxon>
        <taxon>Primates</taxon>
        <taxon>Haplorrhini</taxon>
        <taxon>Catarrhini</taxon>
        <taxon>Hominidae</taxon>
        <taxon>Pongo</taxon>
    </lineage>
</organism>
<accession>Q5REC6</accession>
<feature type="chain" id="PRO_0000326231" description="DNA-directed RNA polymerase II subunit GRINL1A">
    <location>
        <begin position="1"/>
        <end position="367"/>
    </location>
</feature>
<feature type="region of interest" description="Important for transcription repressor activity" evidence="2">
    <location>
        <begin position="29"/>
        <end position="68"/>
    </location>
</feature>
<feature type="region of interest" description="Disordered" evidence="4">
    <location>
        <begin position="117"/>
        <end position="185"/>
    </location>
</feature>
<feature type="region of interest" description="Disordered" evidence="4">
    <location>
        <begin position="203"/>
        <end position="225"/>
    </location>
</feature>
<feature type="region of interest" description="Interaction with Pol II" evidence="2">
    <location>
        <begin position="226"/>
        <end position="297"/>
    </location>
</feature>
<feature type="region of interest" description="Disordered" evidence="4">
    <location>
        <begin position="254"/>
        <end position="281"/>
    </location>
</feature>
<feature type="region of interest" description="Important for transcription repressor activity" evidence="2">
    <location>
        <begin position="298"/>
        <end position="313"/>
    </location>
</feature>
<feature type="region of interest" description="Interaction with Pol II" evidence="2">
    <location>
        <begin position="314"/>
        <end position="339"/>
    </location>
</feature>
<feature type="region of interest" description="Disordered" evidence="4">
    <location>
        <begin position="335"/>
        <end position="367"/>
    </location>
</feature>
<feature type="coiled-coil region" evidence="3">
    <location>
        <begin position="15"/>
        <end position="40"/>
    </location>
</feature>
<feature type="coiled-coil region" evidence="3">
    <location>
        <begin position="300"/>
        <end position="329"/>
    </location>
</feature>
<feature type="compositionally biased region" description="Polar residues" evidence="4">
    <location>
        <begin position="117"/>
        <end position="131"/>
    </location>
</feature>
<feature type="compositionally biased region" description="Polar residues" evidence="4">
    <location>
        <begin position="176"/>
        <end position="185"/>
    </location>
</feature>
<feature type="compositionally biased region" description="Polar residues" evidence="4">
    <location>
        <begin position="205"/>
        <end position="225"/>
    </location>
</feature>
<feature type="compositionally biased region" description="Acidic residues" evidence="4">
    <location>
        <begin position="357"/>
        <end position="367"/>
    </location>
</feature>
<feature type="modified residue" description="Phosphoserine" evidence="2">
    <location>
        <position position="269"/>
    </location>
</feature>
<keyword id="KW-0175">Coiled coil</keyword>
<keyword id="KW-0240">DNA-directed RNA polymerase</keyword>
<keyword id="KW-0539">Nucleus</keyword>
<keyword id="KW-0597">Phosphoprotein</keyword>
<keyword id="KW-1185">Reference proteome</keyword>
<keyword id="KW-0804">Transcription</keyword>
<reference key="1">
    <citation type="submission" date="2004-11" db="EMBL/GenBank/DDBJ databases">
        <authorList>
            <consortium name="The German cDNA consortium"/>
        </authorList>
    </citation>
    <scope>NUCLEOTIDE SEQUENCE [LARGE SCALE MRNA]</scope>
    <source>
        <tissue>Kidney</tissue>
    </source>
</reference>
<comment type="function">
    <text evidence="2">Appears to be a stable component of the Pol II(G) complex form of RNA polymerase II (Pol II). Pol II synthesizes mRNA precursors and many functional non-coding RNAs and is the central component of the basal RNA polymerase II transcription machinery. May play a role in the Mediator complex-dependent regulation of transcription activation. Acts as a negative regulator of transcriptional activation; this repression is relieved by the Mediator complex, which restores Pol II(G) activator-dependent transcription to a level equivalent to that of Pol II.</text>
</comment>
<comment type="subunit">
    <text evidence="2">Component of the Pol II(G) complex, which contains the RNA polymerase II (Pol II) core complex subunits and POLR2M isoform 1. Pol II(G) appears to be an abundant form of Pol II.</text>
</comment>
<comment type="subcellular location">
    <subcellularLocation>
        <location evidence="1">Nucleus</location>
    </subcellularLocation>
</comment>
<comment type="PTM">
    <text evidence="2">Dephosphorylated at Ser-269 by the PNUTS-PP1 complex, promoting RNA polymerase II transcription pause-release.</text>
</comment>
<comment type="similarity">
    <text evidence="5">Belongs to the GRINL1 family.</text>
</comment>
<proteinExistence type="evidence at transcript level"/>
<protein>
    <recommendedName>
        <fullName>DNA-directed RNA polymerase II subunit GRINL1A</fullName>
    </recommendedName>
    <alternativeName>
        <fullName>DNA-directed RNA polymerase II subunit M</fullName>
    </alternativeName>
    <alternativeName>
        <fullName>Glutamate receptor-like protein 1A</fullName>
    </alternativeName>
</protein>